<protein>
    <recommendedName>
        <fullName>Protein DEHYDRATION-INDUCED 19 homolog 3</fullName>
    </recommendedName>
    <alternativeName>
        <fullName>OsDi19-3</fullName>
    </alternativeName>
</protein>
<gene>
    <name type="primary">DI19-3</name>
    <name type="ordered locus">Os01g0672400</name>
    <name type="ordered locus">LOC_Os01g48190</name>
    <name type="ORF">OsJ_002873</name>
    <name evidence="3" type="ORF">OsJ_02966</name>
    <name type="ORF">P0007F06.11-1</name>
    <name type="ORF">P0485G01.1-1</name>
</gene>
<reference key="1">
    <citation type="journal article" date="2002" name="Nature">
        <title>The genome sequence and structure of rice chromosome 1.</title>
        <authorList>
            <person name="Sasaki T."/>
            <person name="Matsumoto T."/>
            <person name="Yamamoto K."/>
            <person name="Sakata K."/>
            <person name="Baba T."/>
            <person name="Katayose Y."/>
            <person name="Wu J."/>
            <person name="Niimura Y."/>
            <person name="Cheng Z."/>
            <person name="Nagamura Y."/>
            <person name="Antonio B.A."/>
            <person name="Kanamori H."/>
            <person name="Hosokawa S."/>
            <person name="Masukawa M."/>
            <person name="Arikawa K."/>
            <person name="Chiden Y."/>
            <person name="Hayashi M."/>
            <person name="Okamoto M."/>
            <person name="Ando T."/>
            <person name="Aoki H."/>
            <person name="Arita K."/>
            <person name="Hamada M."/>
            <person name="Harada C."/>
            <person name="Hijishita S."/>
            <person name="Honda M."/>
            <person name="Ichikawa Y."/>
            <person name="Idonuma A."/>
            <person name="Iijima M."/>
            <person name="Ikeda M."/>
            <person name="Ikeno M."/>
            <person name="Ito S."/>
            <person name="Ito T."/>
            <person name="Ito Y."/>
            <person name="Ito Y."/>
            <person name="Iwabuchi A."/>
            <person name="Kamiya K."/>
            <person name="Karasawa W."/>
            <person name="Katagiri S."/>
            <person name="Kikuta A."/>
            <person name="Kobayashi N."/>
            <person name="Kono I."/>
            <person name="Machita K."/>
            <person name="Maehara T."/>
            <person name="Mizuno H."/>
            <person name="Mizubayashi T."/>
            <person name="Mukai Y."/>
            <person name="Nagasaki H."/>
            <person name="Nakashima M."/>
            <person name="Nakama Y."/>
            <person name="Nakamichi Y."/>
            <person name="Nakamura M."/>
            <person name="Namiki N."/>
            <person name="Negishi M."/>
            <person name="Ohta I."/>
            <person name="Ono N."/>
            <person name="Saji S."/>
            <person name="Sakai K."/>
            <person name="Shibata M."/>
            <person name="Shimokawa T."/>
            <person name="Shomura A."/>
            <person name="Song J."/>
            <person name="Takazaki Y."/>
            <person name="Terasawa K."/>
            <person name="Tsuji K."/>
            <person name="Waki K."/>
            <person name="Yamagata H."/>
            <person name="Yamane H."/>
            <person name="Yoshiki S."/>
            <person name="Yoshihara R."/>
            <person name="Yukawa K."/>
            <person name="Zhong H."/>
            <person name="Iwama H."/>
            <person name="Endo T."/>
            <person name="Ito H."/>
            <person name="Hahn J.H."/>
            <person name="Kim H.-I."/>
            <person name="Eun M.-Y."/>
            <person name="Yano M."/>
            <person name="Jiang J."/>
            <person name="Gojobori T."/>
        </authorList>
    </citation>
    <scope>NUCLEOTIDE SEQUENCE [LARGE SCALE GENOMIC DNA]</scope>
    <source>
        <strain>cv. Nipponbare</strain>
    </source>
</reference>
<reference key="2">
    <citation type="journal article" date="2005" name="Nature">
        <title>The map-based sequence of the rice genome.</title>
        <authorList>
            <consortium name="International rice genome sequencing project (IRGSP)"/>
        </authorList>
    </citation>
    <scope>NUCLEOTIDE SEQUENCE [LARGE SCALE GENOMIC DNA]</scope>
    <source>
        <strain>cv. Nipponbare</strain>
    </source>
</reference>
<reference key="3">
    <citation type="journal article" date="2008" name="Nucleic Acids Res.">
        <title>The rice annotation project database (RAP-DB): 2008 update.</title>
        <authorList>
            <consortium name="The rice annotation project (RAP)"/>
        </authorList>
    </citation>
    <scope>GENOME REANNOTATION</scope>
    <source>
        <strain>cv. Nipponbare</strain>
    </source>
</reference>
<reference key="4">
    <citation type="journal article" date="2013" name="Rice">
        <title>Improvement of the Oryza sativa Nipponbare reference genome using next generation sequence and optical map data.</title>
        <authorList>
            <person name="Kawahara Y."/>
            <person name="de la Bastide M."/>
            <person name="Hamilton J.P."/>
            <person name="Kanamori H."/>
            <person name="McCombie W.R."/>
            <person name="Ouyang S."/>
            <person name="Schwartz D.C."/>
            <person name="Tanaka T."/>
            <person name="Wu J."/>
            <person name="Zhou S."/>
            <person name="Childs K.L."/>
            <person name="Davidson R.M."/>
            <person name="Lin H."/>
            <person name="Quesada-Ocampo L."/>
            <person name="Vaillancourt B."/>
            <person name="Sakai H."/>
            <person name="Lee S.S."/>
            <person name="Kim J."/>
            <person name="Numa H."/>
            <person name="Itoh T."/>
            <person name="Buell C.R."/>
            <person name="Matsumoto T."/>
        </authorList>
    </citation>
    <scope>GENOME REANNOTATION</scope>
    <source>
        <strain>cv. Nipponbare</strain>
    </source>
</reference>
<reference key="5">
    <citation type="journal article" date="2005" name="PLoS Biol.">
        <title>The genomes of Oryza sativa: a history of duplications.</title>
        <authorList>
            <person name="Yu J."/>
            <person name="Wang J."/>
            <person name="Lin W."/>
            <person name="Li S."/>
            <person name="Li H."/>
            <person name="Zhou J."/>
            <person name="Ni P."/>
            <person name="Dong W."/>
            <person name="Hu S."/>
            <person name="Zeng C."/>
            <person name="Zhang J."/>
            <person name="Zhang Y."/>
            <person name="Li R."/>
            <person name="Xu Z."/>
            <person name="Li S."/>
            <person name="Li X."/>
            <person name="Zheng H."/>
            <person name="Cong L."/>
            <person name="Lin L."/>
            <person name="Yin J."/>
            <person name="Geng J."/>
            <person name="Li G."/>
            <person name="Shi J."/>
            <person name="Liu J."/>
            <person name="Lv H."/>
            <person name="Li J."/>
            <person name="Wang J."/>
            <person name="Deng Y."/>
            <person name="Ran L."/>
            <person name="Shi X."/>
            <person name="Wang X."/>
            <person name="Wu Q."/>
            <person name="Li C."/>
            <person name="Ren X."/>
            <person name="Wang J."/>
            <person name="Wang X."/>
            <person name="Li D."/>
            <person name="Liu D."/>
            <person name="Zhang X."/>
            <person name="Ji Z."/>
            <person name="Zhao W."/>
            <person name="Sun Y."/>
            <person name="Zhang Z."/>
            <person name="Bao J."/>
            <person name="Han Y."/>
            <person name="Dong L."/>
            <person name="Ji J."/>
            <person name="Chen P."/>
            <person name="Wu S."/>
            <person name="Liu J."/>
            <person name="Xiao Y."/>
            <person name="Bu D."/>
            <person name="Tan J."/>
            <person name="Yang L."/>
            <person name="Ye C."/>
            <person name="Zhang J."/>
            <person name="Xu J."/>
            <person name="Zhou Y."/>
            <person name="Yu Y."/>
            <person name="Zhang B."/>
            <person name="Zhuang S."/>
            <person name="Wei H."/>
            <person name="Liu B."/>
            <person name="Lei M."/>
            <person name="Yu H."/>
            <person name="Li Y."/>
            <person name="Xu H."/>
            <person name="Wei S."/>
            <person name="He X."/>
            <person name="Fang L."/>
            <person name="Zhang Z."/>
            <person name="Zhang Y."/>
            <person name="Huang X."/>
            <person name="Su Z."/>
            <person name="Tong W."/>
            <person name="Li J."/>
            <person name="Tong Z."/>
            <person name="Li S."/>
            <person name="Ye J."/>
            <person name="Wang L."/>
            <person name="Fang L."/>
            <person name="Lei T."/>
            <person name="Chen C.-S."/>
            <person name="Chen H.-C."/>
            <person name="Xu Z."/>
            <person name="Li H."/>
            <person name="Huang H."/>
            <person name="Zhang F."/>
            <person name="Xu H."/>
            <person name="Li N."/>
            <person name="Zhao C."/>
            <person name="Li S."/>
            <person name="Dong L."/>
            <person name="Huang Y."/>
            <person name="Li L."/>
            <person name="Xi Y."/>
            <person name="Qi Q."/>
            <person name="Li W."/>
            <person name="Zhang B."/>
            <person name="Hu W."/>
            <person name="Zhang Y."/>
            <person name="Tian X."/>
            <person name="Jiao Y."/>
            <person name="Liang X."/>
            <person name="Jin J."/>
            <person name="Gao L."/>
            <person name="Zheng W."/>
            <person name="Hao B."/>
            <person name="Liu S.-M."/>
            <person name="Wang W."/>
            <person name="Yuan L."/>
            <person name="Cao M."/>
            <person name="McDermott J."/>
            <person name="Samudrala R."/>
            <person name="Wang J."/>
            <person name="Wong G.K.-S."/>
            <person name="Yang H."/>
        </authorList>
    </citation>
    <scope>NUCLEOTIDE SEQUENCE [LARGE SCALE GENOMIC DNA]</scope>
    <source>
        <strain>cv. Nipponbare</strain>
    </source>
</reference>
<reference key="6">
    <citation type="journal article" date="2003" name="Science">
        <title>Collection, mapping, and annotation of over 28,000 cDNA clones from japonica rice.</title>
        <authorList>
            <consortium name="The rice full-length cDNA consortium"/>
        </authorList>
    </citation>
    <scope>NUCLEOTIDE SEQUENCE [LARGE SCALE MRNA]</scope>
    <source>
        <strain>cv. Nipponbare</strain>
    </source>
</reference>
<reference key="7">
    <citation type="journal article" date="2006" name="Plant Mol. Biol.">
        <title>The Arabidopsis AtDi19 gene family encodes a novel type of Cys2/His2 zinc-finger protein implicated in ABA-independent dehydration, high-salinity stress and light signaling pathways.</title>
        <authorList>
            <person name="Rodriguez Milla M.A."/>
            <person name="Townsend J."/>
            <person name="Chang I.-F."/>
            <person name="Cushman J.C."/>
        </authorList>
    </citation>
    <scope>GENE FAMILY</scope>
    <scope>NOMENCLATURE</scope>
</reference>
<accession>Q5QMP3</accession>
<accession>A2ZWF1</accession>
<accession>B7E5F9</accession>
<sequence>MDSEHWISSLAAAKRFYAAQLGHVDDMAGIGMEEVEMEMEDDGEGMELELEMQLEEATWPDVACPYCYEDHDIASLCAHLEEDHPYEPHTSPCPICFEKITRDMLNHITMQHGYLFKSGRRMRRFDIPESQALSLLSRDLRDAQLQALLGGGHRQRRSNTTATNISADPLLSSFGLGFSTLDSEERSKAPVPIPDDTSIHKDTPAQPWESRIDSSLTSEEREQKRKQATDRATFVQGLVLSTLFED</sequence>
<proteinExistence type="evidence at transcript level"/>
<comment type="similarity">
    <text evidence="2">Belongs to the Di19 family.</text>
</comment>
<dbReference type="EMBL" id="AP003223">
    <property type="protein sequence ID" value="BAD73302.1"/>
    <property type="molecule type" value="Genomic_DNA"/>
</dbReference>
<dbReference type="EMBL" id="AP003264">
    <property type="protein sequence ID" value="BAD73355.1"/>
    <property type="molecule type" value="Genomic_DNA"/>
</dbReference>
<dbReference type="EMBL" id="AP008207">
    <property type="protein sequence ID" value="BAF05742.1"/>
    <property type="molecule type" value="Genomic_DNA"/>
</dbReference>
<dbReference type="EMBL" id="AP014957">
    <property type="protein sequence ID" value="BAS73620.1"/>
    <property type="molecule type" value="Genomic_DNA"/>
</dbReference>
<dbReference type="EMBL" id="CM000138">
    <property type="protein sequence ID" value="EEE55158.1"/>
    <property type="molecule type" value="Genomic_DNA"/>
</dbReference>
<dbReference type="EMBL" id="AK060901">
    <property type="protein sequence ID" value="BAG87606.1"/>
    <property type="molecule type" value="mRNA"/>
</dbReference>
<dbReference type="EMBL" id="AK061329">
    <property type="protein sequence ID" value="BAG87859.1"/>
    <property type="molecule type" value="mRNA"/>
</dbReference>
<dbReference type="EMBL" id="AK101922">
    <property type="protein sequence ID" value="BAG95296.1"/>
    <property type="molecule type" value="mRNA"/>
</dbReference>
<dbReference type="RefSeq" id="XP_015650727.1">
    <property type="nucleotide sequence ID" value="XM_015795241.1"/>
</dbReference>
<dbReference type="FunCoup" id="Q5QMP3">
    <property type="interactions" value="1"/>
</dbReference>
<dbReference type="PaxDb" id="39947-Q5QMP3"/>
<dbReference type="EnsemblPlants" id="Os01t0672400-01">
    <property type="protein sequence ID" value="Os01t0672400-01"/>
    <property type="gene ID" value="Os01g0672400"/>
</dbReference>
<dbReference type="EnsemblPlants" id="Os01t0672400-03">
    <property type="protein sequence ID" value="Os01t0672400-03"/>
    <property type="gene ID" value="Os01g0672400"/>
</dbReference>
<dbReference type="EnsemblPlants" id="Os01t0672400-04">
    <property type="protein sequence ID" value="Os01t0672400-04"/>
    <property type="gene ID" value="Os01g0672400"/>
</dbReference>
<dbReference type="Gramene" id="Os01t0672400-01">
    <property type="protein sequence ID" value="Os01t0672400-01"/>
    <property type="gene ID" value="Os01g0672400"/>
</dbReference>
<dbReference type="Gramene" id="Os01t0672400-03">
    <property type="protein sequence ID" value="Os01t0672400-03"/>
    <property type="gene ID" value="Os01g0672400"/>
</dbReference>
<dbReference type="Gramene" id="Os01t0672400-04">
    <property type="protein sequence ID" value="Os01t0672400-04"/>
    <property type="gene ID" value="Os01g0672400"/>
</dbReference>
<dbReference type="KEGG" id="dosa:Os01g0672400"/>
<dbReference type="eggNOG" id="ENOG502QVUG">
    <property type="taxonomic scope" value="Eukaryota"/>
</dbReference>
<dbReference type="HOGENOM" id="CLU_072240_0_0_1"/>
<dbReference type="InParanoid" id="Q5QMP3"/>
<dbReference type="OMA" id="GHRCRRY"/>
<dbReference type="OrthoDB" id="7873042at2759"/>
<dbReference type="Proteomes" id="UP000000763">
    <property type="component" value="Chromosome 1"/>
</dbReference>
<dbReference type="Proteomes" id="UP000007752">
    <property type="component" value="Chromosome 1"/>
</dbReference>
<dbReference type="Proteomes" id="UP000059680">
    <property type="component" value="Chromosome 1"/>
</dbReference>
<dbReference type="ExpressionAtlas" id="Q5QMP3">
    <property type="expression patterns" value="baseline and differential"/>
</dbReference>
<dbReference type="InterPro" id="IPR033347">
    <property type="entry name" value="DI19"/>
</dbReference>
<dbReference type="InterPro" id="IPR027935">
    <property type="entry name" value="Di19_C"/>
</dbReference>
<dbReference type="InterPro" id="IPR008598">
    <property type="entry name" value="Di19_Zn-bd"/>
</dbReference>
<dbReference type="PANTHER" id="PTHR31875">
    <property type="entry name" value="PROTEIN DEHYDRATION-INDUCED 19"/>
    <property type="match status" value="1"/>
</dbReference>
<dbReference type="PANTHER" id="PTHR31875:SF4">
    <property type="entry name" value="PROTEIN DEHYDRATION-INDUCED 19 HOMOLOG 3"/>
    <property type="match status" value="1"/>
</dbReference>
<dbReference type="Pfam" id="PF14571">
    <property type="entry name" value="Di19_C"/>
    <property type="match status" value="1"/>
</dbReference>
<dbReference type="Pfam" id="PF05605">
    <property type="entry name" value="zf-Di19"/>
    <property type="match status" value="1"/>
</dbReference>
<feature type="chain" id="PRO_0000304422" description="Protein DEHYDRATION-INDUCED 19 homolog 3">
    <location>
        <begin position="1"/>
        <end position="246"/>
    </location>
</feature>
<feature type="region of interest" description="Disordered" evidence="1">
    <location>
        <begin position="185"/>
        <end position="230"/>
    </location>
</feature>
<feature type="compositionally biased region" description="Basic and acidic residues" evidence="1">
    <location>
        <begin position="218"/>
        <end position="229"/>
    </location>
</feature>
<keyword id="KW-1185">Reference proteome</keyword>
<evidence type="ECO:0000256" key="1">
    <source>
        <dbReference type="SAM" id="MobiDB-lite"/>
    </source>
</evidence>
<evidence type="ECO:0000305" key="2"/>
<evidence type="ECO:0000312" key="3">
    <source>
        <dbReference type="EMBL" id="EEE55158.1"/>
    </source>
</evidence>
<organism>
    <name type="scientific">Oryza sativa subsp. japonica</name>
    <name type="common">Rice</name>
    <dbReference type="NCBI Taxonomy" id="39947"/>
    <lineage>
        <taxon>Eukaryota</taxon>
        <taxon>Viridiplantae</taxon>
        <taxon>Streptophyta</taxon>
        <taxon>Embryophyta</taxon>
        <taxon>Tracheophyta</taxon>
        <taxon>Spermatophyta</taxon>
        <taxon>Magnoliopsida</taxon>
        <taxon>Liliopsida</taxon>
        <taxon>Poales</taxon>
        <taxon>Poaceae</taxon>
        <taxon>BOP clade</taxon>
        <taxon>Oryzoideae</taxon>
        <taxon>Oryzeae</taxon>
        <taxon>Oryzinae</taxon>
        <taxon>Oryza</taxon>
        <taxon>Oryza sativa</taxon>
    </lineage>
</organism>
<name>DI193_ORYSJ</name>